<keyword id="KW-0104">Cadmium</keyword>
<keyword id="KW-0903">Direct protein sequencing</keyword>
<keyword id="KW-0479">Metal-binding</keyword>
<keyword id="KW-0480">Metal-thiolate cluster</keyword>
<sequence>PGPCNCIETNVCICGTGCSGKCCQCGDACKCASGCGCSGCKVVCRCSGTCACGCDCTGPTNCKCDSGCSCK</sequence>
<organism>
    <name type="scientific">Mytilus edulis</name>
    <name type="common">Blue mussel</name>
    <dbReference type="NCBI Taxonomy" id="6550"/>
    <lineage>
        <taxon>Eukaryota</taxon>
        <taxon>Metazoa</taxon>
        <taxon>Spiralia</taxon>
        <taxon>Lophotrochozoa</taxon>
        <taxon>Mollusca</taxon>
        <taxon>Bivalvia</taxon>
        <taxon>Autobranchia</taxon>
        <taxon>Pteriomorphia</taxon>
        <taxon>Mytilida</taxon>
        <taxon>Mytiloidea</taxon>
        <taxon>Mytilidae</taxon>
        <taxon>Mytilinae</taxon>
        <taxon>Mytilus</taxon>
    </lineage>
</organism>
<accession>P80258</accession>
<evidence type="ECO:0000250" key="1">
    <source>
        <dbReference type="UniProtKB" id="P33187"/>
    </source>
</evidence>
<evidence type="ECO:0000305" key="2"/>
<reference key="1">
    <citation type="journal article" date="1993" name="Eur. J. Biochem.">
        <title>Complete amino acid sequences of five dimeric and four monomeric forms of metallothionein from the edible mussel Mytilus edulis.</title>
        <authorList>
            <person name="Mackay E.A."/>
            <person name="Overnell J."/>
            <person name="Dunbar B."/>
            <person name="Davidson I."/>
            <person name="Hunziker P.E."/>
            <person name="Kaegi J.H.R."/>
            <person name="Fothergill J.E."/>
        </authorList>
    </citation>
    <scope>PROTEIN SEQUENCE</scope>
</reference>
<protein>
    <recommendedName>
        <fullName>Metallothionein 20-III isoform B</fullName>
        <shortName>MT-20-IIIB</shortName>
    </recommendedName>
</protein>
<dbReference type="PIR" id="S47577">
    <property type="entry name" value="S47577"/>
</dbReference>
<dbReference type="GO" id="GO:0046872">
    <property type="term" value="F:metal ion binding"/>
    <property type="evidence" value="ECO:0007669"/>
    <property type="project" value="UniProtKB-KW"/>
</dbReference>
<dbReference type="InterPro" id="IPR001008">
    <property type="entry name" value="Metalthion_mollusc"/>
</dbReference>
<dbReference type="PRINTS" id="PR00875">
    <property type="entry name" value="MTMOLLUSC"/>
</dbReference>
<comment type="function">
    <text>The metallothioneins are involved in the cellular sequestration of toxic metal ions.</text>
</comment>
<comment type="subunit">
    <text>Homodimer.</text>
</comment>
<comment type="induction">
    <text>By cadmium.</text>
</comment>
<comment type="similarity">
    <text evidence="2">Belongs to the metallothionein superfamily. Type 2 family.</text>
</comment>
<proteinExistence type="evidence at protein level"/>
<feature type="chain" id="PRO_0000197332" description="Metallothionein 20-III isoform B">
    <location>
        <begin position="1"/>
        <end position="71"/>
    </location>
</feature>
<feature type="binding site" evidence="1">
    <location>
        <position position="14"/>
    </location>
    <ligand>
        <name>Cd(2+)</name>
        <dbReference type="ChEBI" id="CHEBI:48775"/>
        <label>1</label>
    </ligand>
</feature>
<feature type="binding site" evidence="1">
    <location>
        <position position="18"/>
    </location>
    <ligand>
        <name>Cd(2+)</name>
        <dbReference type="ChEBI" id="CHEBI:48775"/>
        <label>1</label>
    </ligand>
</feature>
<feature type="binding site" evidence="1">
    <location>
        <position position="18"/>
    </location>
    <ligand>
        <name>Cd(2+)</name>
        <dbReference type="ChEBI" id="CHEBI:48775"/>
        <label>2</label>
    </ligand>
</feature>
<feature type="binding site" evidence="1">
    <location>
        <position position="23"/>
    </location>
    <ligand>
        <name>Cd(2+)</name>
        <dbReference type="ChEBI" id="CHEBI:48775"/>
        <label>2</label>
    </ligand>
</feature>
<feature type="binding site" evidence="1">
    <location>
        <position position="25"/>
    </location>
    <ligand>
        <name>Cd(2+)</name>
        <dbReference type="ChEBI" id="CHEBI:48775"/>
        <label>3</label>
    </ligand>
</feature>
<feature type="binding site" evidence="1">
    <location>
        <position position="29"/>
    </location>
    <ligand>
        <name>Cd(2+)</name>
        <dbReference type="ChEBI" id="CHEBI:48775"/>
        <label>3</label>
    </ligand>
</feature>
<feature type="binding site" evidence="1">
    <location>
        <position position="31"/>
    </location>
    <ligand>
        <name>Cd(2+)</name>
        <dbReference type="ChEBI" id="CHEBI:48775"/>
        <label>1</label>
    </ligand>
</feature>
<feature type="binding site" evidence="1">
    <location>
        <position position="31"/>
    </location>
    <ligand>
        <name>Cd(2+)</name>
        <dbReference type="ChEBI" id="CHEBI:48775"/>
        <label>3</label>
    </ligand>
</feature>
<feature type="binding site" evidence="1">
    <location>
        <position position="35"/>
    </location>
    <ligand>
        <name>Cd(2+)</name>
        <dbReference type="ChEBI" id="CHEBI:48775"/>
        <label>1</label>
    </ligand>
</feature>
<feature type="binding site" evidence="1">
    <location>
        <position position="37"/>
    </location>
    <ligand>
        <name>Cd(2+)</name>
        <dbReference type="ChEBI" id="CHEBI:48775"/>
        <label>2</label>
    </ligand>
</feature>
<feature type="binding site" evidence="1">
    <location>
        <position position="40"/>
    </location>
    <ligand>
        <name>Cd(2+)</name>
        <dbReference type="ChEBI" id="CHEBI:48775"/>
        <label>2</label>
    </ligand>
</feature>
<feature type="binding site" evidence="1">
    <location>
        <position position="40"/>
    </location>
    <ligand>
        <name>Cd(2+)</name>
        <dbReference type="ChEBI" id="CHEBI:48775"/>
        <label>3</label>
    </ligand>
</feature>
<feature type="binding site" evidence="1">
    <location>
        <position position="44"/>
    </location>
    <ligand>
        <name>Cd(2+)</name>
        <dbReference type="ChEBI" id="CHEBI:48775"/>
        <label>4</label>
    </ligand>
</feature>
<feature type="binding site" evidence="1">
    <location>
        <position position="46"/>
    </location>
    <ligand>
        <name>Cd(2+)</name>
        <dbReference type="ChEBI" id="CHEBI:48775"/>
        <label>5</label>
    </ligand>
</feature>
<feature type="binding site" evidence="1">
    <location>
        <position position="50"/>
    </location>
    <ligand>
        <name>Cd(2+)</name>
        <dbReference type="ChEBI" id="CHEBI:48775"/>
        <label>5</label>
    </ligand>
</feature>
<feature type="binding site" evidence="1">
    <location>
        <position position="52"/>
    </location>
    <ligand>
        <name>Cd(2+)</name>
        <dbReference type="ChEBI" id="CHEBI:48775"/>
        <label>5</label>
    </ligand>
</feature>
<feature type="binding site" evidence="1">
    <location>
        <position position="52"/>
    </location>
    <ligand>
        <name>Cd(2+)</name>
        <dbReference type="ChEBI" id="CHEBI:48775"/>
        <label>6</label>
    </ligand>
</feature>
<feature type="binding site" evidence="1">
    <location>
        <position position="56"/>
    </location>
    <ligand>
        <name>Cd(2+)</name>
        <dbReference type="ChEBI" id="CHEBI:48775"/>
        <label>4</label>
    </ligand>
</feature>
<feature type="binding site" evidence="1">
    <location>
        <position position="56"/>
    </location>
    <ligand>
        <name>Cd(2+)</name>
        <dbReference type="ChEBI" id="CHEBI:48775"/>
        <label>5</label>
    </ligand>
</feature>
<feature type="binding site" evidence="1">
    <location>
        <position position="62"/>
    </location>
    <ligand>
        <name>Cd(2+)</name>
        <dbReference type="ChEBI" id="CHEBI:48775"/>
        <label>4</label>
    </ligand>
</feature>
<feature type="binding site" evidence="1">
    <location>
        <position position="64"/>
    </location>
    <ligand>
        <name>Cd(2+)</name>
        <dbReference type="ChEBI" id="CHEBI:48775"/>
        <label>6</label>
    </ligand>
</feature>
<feature type="binding site" evidence="1">
    <location>
        <position position="68"/>
    </location>
    <ligand>
        <name>Cd(2+)</name>
        <dbReference type="ChEBI" id="CHEBI:48775"/>
        <label>6</label>
    </ligand>
</feature>
<feature type="binding site" evidence="1">
    <location>
        <position position="70"/>
    </location>
    <ligand>
        <name>Cd(2+)</name>
        <dbReference type="ChEBI" id="CHEBI:48775"/>
        <label>4</label>
    </ligand>
</feature>
<feature type="binding site" evidence="1">
    <location>
        <position position="70"/>
    </location>
    <ligand>
        <name>Cd(2+)</name>
        <dbReference type="ChEBI" id="CHEBI:48775"/>
        <label>6</label>
    </ligand>
</feature>
<name>MT23B_MYTED</name>